<sequence>MPLFQNATFHISAHNLSDLPAPAGIEVVFAGRSNAGKSSALNTLANHNRLAFVSKQPGRTQLINFFSLGNDRFLVDLPGYGYAKVPEAVRKHWQLTLASYLSQRPCIGGLVLVMDCRHPLTPLDRQMLNWYSPSGKPIHALLTKADKLSRQAANQTLQQVRKELEASWGNCSVQLFSSLKKQGVEEAETVIGRWLFAPEDDVPDAVA</sequence>
<feature type="chain" id="PRO_0000266891" description="Probable GTP-binding protein EngB">
    <location>
        <begin position="1"/>
        <end position="207"/>
    </location>
</feature>
<feature type="domain" description="EngB-type G" evidence="1">
    <location>
        <begin position="23"/>
        <end position="197"/>
    </location>
</feature>
<feature type="binding site" evidence="1">
    <location>
        <begin position="31"/>
        <end position="38"/>
    </location>
    <ligand>
        <name>GTP</name>
        <dbReference type="ChEBI" id="CHEBI:37565"/>
    </ligand>
</feature>
<feature type="binding site" evidence="1">
    <location>
        <position position="38"/>
    </location>
    <ligand>
        <name>Mg(2+)</name>
        <dbReference type="ChEBI" id="CHEBI:18420"/>
    </ligand>
</feature>
<feature type="binding site" evidence="1">
    <location>
        <begin position="58"/>
        <end position="62"/>
    </location>
    <ligand>
        <name>GTP</name>
        <dbReference type="ChEBI" id="CHEBI:37565"/>
    </ligand>
</feature>
<feature type="binding site" evidence="1">
    <location>
        <position position="60"/>
    </location>
    <ligand>
        <name>Mg(2+)</name>
        <dbReference type="ChEBI" id="CHEBI:18420"/>
    </ligand>
</feature>
<feature type="binding site" evidence="1">
    <location>
        <begin position="76"/>
        <end position="79"/>
    </location>
    <ligand>
        <name>GTP</name>
        <dbReference type="ChEBI" id="CHEBI:37565"/>
    </ligand>
</feature>
<feature type="binding site" evidence="1">
    <location>
        <begin position="143"/>
        <end position="146"/>
    </location>
    <ligand>
        <name>GTP</name>
        <dbReference type="ChEBI" id="CHEBI:37565"/>
    </ligand>
</feature>
<feature type="binding site" evidence="1">
    <location>
        <begin position="176"/>
        <end position="178"/>
    </location>
    <ligand>
        <name>GTP</name>
        <dbReference type="ChEBI" id="CHEBI:37565"/>
    </ligand>
</feature>
<proteinExistence type="inferred from homology"/>
<comment type="function">
    <text evidence="1">Necessary for normal cell division and for the maintenance of normal septation.</text>
</comment>
<comment type="cofactor">
    <cofactor evidence="1">
        <name>Mg(2+)</name>
        <dbReference type="ChEBI" id="CHEBI:18420"/>
    </cofactor>
</comment>
<comment type="similarity">
    <text evidence="1">Belongs to the TRAFAC class TrmE-Era-EngA-EngB-Septin-like GTPase superfamily. EngB GTPase family.</text>
</comment>
<accession>Q1H4T4</accession>
<keyword id="KW-0131">Cell cycle</keyword>
<keyword id="KW-0132">Cell division</keyword>
<keyword id="KW-0342">GTP-binding</keyword>
<keyword id="KW-0460">Magnesium</keyword>
<keyword id="KW-0479">Metal-binding</keyword>
<keyword id="KW-0547">Nucleotide-binding</keyword>
<keyword id="KW-1185">Reference proteome</keyword>
<keyword id="KW-0717">Septation</keyword>
<evidence type="ECO:0000255" key="1">
    <source>
        <dbReference type="HAMAP-Rule" id="MF_00321"/>
    </source>
</evidence>
<name>ENGB_METFK</name>
<dbReference type="EMBL" id="CP000284">
    <property type="protein sequence ID" value="ABE48503.1"/>
    <property type="molecule type" value="Genomic_DNA"/>
</dbReference>
<dbReference type="RefSeq" id="WP_011478600.1">
    <property type="nucleotide sequence ID" value="NC_007947.1"/>
</dbReference>
<dbReference type="SMR" id="Q1H4T4"/>
<dbReference type="STRING" id="265072.Mfla_0232"/>
<dbReference type="KEGG" id="mfa:Mfla_0232"/>
<dbReference type="eggNOG" id="COG0218">
    <property type="taxonomic scope" value="Bacteria"/>
</dbReference>
<dbReference type="HOGENOM" id="CLU_033732_1_0_4"/>
<dbReference type="OrthoDB" id="9804921at2"/>
<dbReference type="Proteomes" id="UP000002440">
    <property type="component" value="Chromosome"/>
</dbReference>
<dbReference type="GO" id="GO:0005829">
    <property type="term" value="C:cytosol"/>
    <property type="evidence" value="ECO:0007669"/>
    <property type="project" value="TreeGrafter"/>
</dbReference>
<dbReference type="GO" id="GO:0005525">
    <property type="term" value="F:GTP binding"/>
    <property type="evidence" value="ECO:0007669"/>
    <property type="project" value="UniProtKB-UniRule"/>
</dbReference>
<dbReference type="GO" id="GO:0046872">
    <property type="term" value="F:metal ion binding"/>
    <property type="evidence" value="ECO:0007669"/>
    <property type="project" value="UniProtKB-KW"/>
</dbReference>
<dbReference type="GO" id="GO:0000917">
    <property type="term" value="P:division septum assembly"/>
    <property type="evidence" value="ECO:0007669"/>
    <property type="project" value="UniProtKB-KW"/>
</dbReference>
<dbReference type="CDD" id="cd01876">
    <property type="entry name" value="YihA_EngB"/>
    <property type="match status" value="1"/>
</dbReference>
<dbReference type="FunFam" id="3.40.50.300:FF:000098">
    <property type="entry name" value="Probable GTP-binding protein EngB"/>
    <property type="match status" value="1"/>
</dbReference>
<dbReference type="Gene3D" id="3.40.50.300">
    <property type="entry name" value="P-loop containing nucleotide triphosphate hydrolases"/>
    <property type="match status" value="1"/>
</dbReference>
<dbReference type="HAMAP" id="MF_00321">
    <property type="entry name" value="GTPase_EngB"/>
    <property type="match status" value="1"/>
</dbReference>
<dbReference type="InterPro" id="IPR030393">
    <property type="entry name" value="G_ENGB_dom"/>
</dbReference>
<dbReference type="InterPro" id="IPR006073">
    <property type="entry name" value="GTP-bd"/>
</dbReference>
<dbReference type="InterPro" id="IPR019987">
    <property type="entry name" value="GTP-bd_ribosome_bio_YsxC"/>
</dbReference>
<dbReference type="InterPro" id="IPR027417">
    <property type="entry name" value="P-loop_NTPase"/>
</dbReference>
<dbReference type="NCBIfam" id="TIGR03598">
    <property type="entry name" value="GTPase_YsxC"/>
    <property type="match status" value="1"/>
</dbReference>
<dbReference type="PANTHER" id="PTHR11649:SF13">
    <property type="entry name" value="ENGB-TYPE G DOMAIN-CONTAINING PROTEIN"/>
    <property type="match status" value="1"/>
</dbReference>
<dbReference type="PANTHER" id="PTHR11649">
    <property type="entry name" value="MSS1/TRME-RELATED GTP-BINDING PROTEIN"/>
    <property type="match status" value="1"/>
</dbReference>
<dbReference type="Pfam" id="PF01926">
    <property type="entry name" value="MMR_HSR1"/>
    <property type="match status" value="1"/>
</dbReference>
<dbReference type="SUPFAM" id="SSF52540">
    <property type="entry name" value="P-loop containing nucleoside triphosphate hydrolases"/>
    <property type="match status" value="1"/>
</dbReference>
<dbReference type="PROSITE" id="PS51706">
    <property type="entry name" value="G_ENGB"/>
    <property type="match status" value="1"/>
</dbReference>
<reference key="1">
    <citation type="submission" date="2006-03" db="EMBL/GenBank/DDBJ databases">
        <title>Complete sequence of Methylobacillus flagellatus KT.</title>
        <authorList>
            <consortium name="US DOE Joint Genome Institute"/>
            <person name="Copeland A."/>
            <person name="Lucas S."/>
            <person name="Lapidus A."/>
            <person name="Barry K."/>
            <person name="Detter J.C."/>
            <person name="Glavina del Rio T."/>
            <person name="Hammon N."/>
            <person name="Israni S."/>
            <person name="Dalin E."/>
            <person name="Tice H."/>
            <person name="Pitluck S."/>
            <person name="Brettin T."/>
            <person name="Bruce D."/>
            <person name="Han C."/>
            <person name="Tapia R."/>
            <person name="Saunders E."/>
            <person name="Gilna P."/>
            <person name="Schmutz J."/>
            <person name="Larimer F."/>
            <person name="Land M."/>
            <person name="Kyrpides N."/>
            <person name="Anderson I."/>
            <person name="Richardson P."/>
        </authorList>
    </citation>
    <scope>NUCLEOTIDE SEQUENCE [LARGE SCALE GENOMIC DNA]</scope>
    <source>
        <strain>ATCC 51484 / DSM 6875 / VKM B-1610 / KT</strain>
    </source>
</reference>
<protein>
    <recommendedName>
        <fullName evidence="1">Probable GTP-binding protein EngB</fullName>
    </recommendedName>
</protein>
<gene>
    <name evidence="1" type="primary">engB</name>
    <name type="ordered locus">Mfla_0232</name>
</gene>
<organism>
    <name type="scientific">Methylobacillus flagellatus (strain ATCC 51484 / DSM 6875 / VKM B-1610 / KT)</name>
    <dbReference type="NCBI Taxonomy" id="265072"/>
    <lineage>
        <taxon>Bacteria</taxon>
        <taxon>Pseudomonadati</taxon>
        <taxon>Pseudomonadota</taxon>
        <taxon>Betaproteobacteria</taxon>
        <taxon>Nitrosomonadales</taxon>
        <taxon>Methylophilaceae</taxon>
        <taxon>Methylobacillus</taxon>
    </lineage>
</organism>